<feature type="chain" id="PRO_0000172656" description="Phosphatidylglycerol--prolipoprotein diacylglyceryl transferase">
    <location>
        <begin position="1"/>
        <end position="270"/>
    </location>
</feature>
<feature type="transmembrane region" description="Helical" evidence="1">
    <location>
        <begin position="10"/>
        <end position="30"/>
    </location>
</feature>
<feature type="transmembrane region" description="Helical" evidence="1">
    <location>
        <begin position="56"/>
        <end position="76"/>
    </location>
</feature>
<feature type="transmembrane region" description="Helical" evidence="1">
    <location>
        <begin position="92"/>
        <end position="112"/>
    </location>
</feature>
<feature type="transmembrane region" description="Helical" evidence="1">
    <location>
        <begin position="120"/>
        <end position="140"/>
    </location>
</feature>
<feature type="transmembrane region" description="Helical" evidence="1">
    <location>
        <begin position="175"/>
        <end position="195"/>
    </location>
</feature>
<feature type="transmembrane region" description="Helical" evidence="1">
    <location>
        <begin position="202"/>
        <end position="222"/>
    </location>
</feature>
<feature type="transmembrane region" description="Helical" evidence="1">
    <location>
        <begin position="237"/>
        <end position="257"/>
    </location>
</feature>
<feature type="binding site" evidence="1">
    <location>
        <position position="139"/>
    </location>
    <ligand>
        <name>a 1,2-diacyl-sn-glycero-3-phospho-(1'-sn-glycerol)</name>
        <dbReference type="ChEBI" id="CHEBI:64716"/>
    </ligand>
</feature>
<dbReference type="EC" id="2.5.1.145" evidence="1"/>
<dbReference type="EMBL" id="AE016853">
    <property type="protein sequence ID" value="AAO58709.1"/>
    <property type="molecule type" value="Genomic_DNA"/>
</dbReference>
<dbReference type="RefSeq" id="NP_795014.1">
    <property type="nucleotide sequence ID" value="NC_004578.1"/>
</dbReference>
<dbReference type="RefSeq" id="WP_003382072.1">
    <property type="nucleotide sequence ID" value="NC_004578.1"/>
</dbReference>
<dbReference type="SMR" id="Q87UL3"/>
<dbReference type="STRING" id="223283.PSPTO_5283"/>
<dbReference type="GeneID" id="61792388"/>
<dbReference type="KEGG" id="pst:PSPTO_5283"/>
<dbReference type="PATRIC" id="fig|223283.9.peg.5408"/>
<dbReference type="eggNOG" id="COG0682">
    <property type="taxonomic scope" value="Bacteria"/>
</dbReference>
<dbReference type="HOGENOM" id="CLU_013386_1_0_6"/>
<dbReference type="OrthoDB" id="871140at2"/>
<dbReference type="PhylomeDB" id="Q87UL3"/>
<dbReference type="UniPathway" id="UPA00664"/>
<dbReference type="Proteomes" id="UP000002515">
    <property type="component" value="Chromosome"/>
</dbReference>
<dbReference type="GO" id="GO:0005886">
    <property type="term" value="C:plasma membrane"/>
    <property type="evidence" value="ECO:0007669"/>
    <property type="project" value="UniProtKB-SubCell"/>
</dbReference>
<dbReference type="GO" id="GO:0008961">
    <property type="term" value="F:phosphatidylglycerol-prolipoprotein diacylglyceryl transferase activity"/>
    <property type="evidence" value="ECO:0007669"/>
    <property type="project" value="UniProtKB-UniRule"/>
</dbReference>
<dbReference type="GO" id="GO:0042158">
    <property type="term" value="P:lipoprotein biosynthetic process"/>
    <property type="evidence" value="ECO:0007669"/>
    <property type="project" value="UniProtKB-UniRule"/>
</dbReference>
<dbReference type="HAMAP" id="MF_01147">
    <property type="entry name" value="Lgt"/>
    <property type="match status" value="1"/>
</dbReference>
<dbReference type="InterPro" id="IPR001640">
    <property type="entry name" value="Lgt"/>
</dbReference>
<dbReference type="NCBIfam" id="TIGR00544">
    <property type="entry name" value="lgt"/>
    <property type="match status" value="1"/>
</dbReference>
<dbReference type="PANTHER" id="PTHR30589:SF0">
    <property type="entry name" value="PHOSPHATIDYLGLYCEROL--PROLIPOPROTEIN DIACYLGLYCERYL TRANSFERASE"/>
    <property type="match status" value="1"/>
</dbReference>
<dbReference type="PANTHER" id="PTHR30589">
    <property type="entry name" value="PROLIPOPROTEIN DIACYLGLYCERYL TRANSFERASE"/>
    <property type="match status" value="1"/>
</dbReference>
<dbReference type="Pfam" id="PF01790">
    <property type="entry name" value="LGT"/>
    <property type="match status" value="1"/>
</dbReference>
<dbReference type="PROSITE" id="PS01311">
    <property type="entry name" value="LGT"/>
    <property type="match status" value="1"/>
</dbReference>
<keyword id="KW-0997">Cell inner membrane</keyword>
<keyword id="KW-1003">Cell membrane</keyword>
<keyword id="KW-0472">Membrane</keyword>
<keyword id="KW-1185">Reference proteome</keyword>
<keyword id="KW-0808">Transferase</keyword>
<keyword id="KW-0812">Transmembrane</keyword>
<keyword id="KW-1133">Transmembrane helix</keyword>
<gene>
    <name evidence="1" type="primary">lgt</name>
    <name type="ordered locus">PSPTO_5283</name>
</gene>
<comment type="function">
    <text evidence="1">Catalyzes the transfer of the diacylglyceryl group from phosphatidylglycerol to the sulfhydryl group of the N-terminal cysteine of a prolipoprotein, the first step in the formation of mature lipoproteins.</text>
</comment>
<comment type="catalytic activity">
    <reaction evidence="1">
        <text>L-cysteinyl-[prolipoprotein] + a 1,2-diacyl-sn-glycero-3-phospho-(1'-sn-glycerol) = an S-1,2-diacyl-sn-glyceryl-L-cysteinyl-[prolipoprotein] + sn-glycerol 1-phosphate + H(+)</text>
        <dbReference type="Rhea" id="RHEA:56712"/>
        <dbReference type="Rhea" id="RHEA-COMP:14679"/>
        <dbReference type="Rhea" id="RHEA-COMP:14680"/>
        <dbReference type="ChEBI" id="CHEBI:15378"/>
        <dbReference type="ChEBI" id="CHEBI:29950"/>
        <dbReference type="ChEBI" id="CHEBI:57685"/>
        <dbReference type="ChEBI" id="CHEBI:64716"/>
        <dbReference type="ChEBI" id="CHEBI:140658"/>
        <dbReference type="EC" id="2.5.1.145"/>
    </reaction>
</comment>
<comment type="pathway">
    <text evidence="1">Protein modification; lipoprotein biosynthesis (diacylglyceryl transfer).</text>
</comment>
<comment type="subcellular location">
    <subcellularLocation>
        <location evidence="1">Cell inner membrane</location>
        <topology evidence="1">Multi-pass membrane protein</topology>
    </subcellularLocation>
</comment>
<comment type="similarity">
    <text evidence="1">Belongs to the Lgt family.</text>
</comment>
<organism>
    <name type="scientific">Pseudomonas syringae pv. tomato (strain ATCC BAA-871 / DC3000)</name>
    <dbReference type="NCBI Taxonomy" id="223283"/>
    <lineage>
        <taxon>Bacteria</taxon>
        <taxon>Pseudomonadati</taxon>
        <taxon>Pseudomonadota</taxon>
        <taxon>Gammaproteobacteria</taxon>
        <taxon>Pseudomonadales</taxon>
        <taxon>Pseudomonadaceae</taxon>
        <taxon>Pseudomonas</taxon>
    </lineage>
</organism>
<protein>
    <recommendedName>
        <fullName evidence="1">Phosphatidylglycerol--prolipoprotein diacylglyceryl transferase</fullName>
        <ecNumber evidence="1">2.5.1.145</ecNumber>
    </recommendedName>
</protein>
<reference key="1">
    <citation type="journal article" date="2003" name="Proc. Natl. Acad. Sci. U.S.A.">
        <title>The complete genome sequence of the Arabidopsis and tomato pathogen Pseudomonas syringae pv. tomato DC3000.</title>
        <authorList>
            <person name="Buell C.R."/>
            <person name="Joardar V."/>
            <person name="Lindeberg M."/>
            <person name="Selengut J."/>
            <person name="Paulsen I.T."/>
            <person name="Gwinn M.L."/>
            <person name="Dodson R.J."/>
            <person name="DeBoy R.T."/>
            <person name="Durkin A.S."/>
            <person name="Kolonay J.F."/>
            <person name="Madupu R."/>
            <person name="Daugherty S.C."/>
            <person name="Brinkac L.M."/>
            <person name="Beanan M.J."/>
            <person name="Haft D.H."/>
            <person name="Nelson W.C."/>
            <person name="Davidsen T.M."/>
            <person name="Zafar N."/>
            <person name="Zhou L."/>
            <person name="Liu J."/>
            <person name="Yuan Q."/>
            <person name="Khouri H.M."/>
            <person name="Fedorova N.B."/>
            <person name="Tran B."/>
            <person name="Russell D."/>
            <person name="Berry K.J."/>
            <person name="Utterback T.R."/>
            <person name="Van Aken S.E."/>
            <person name="Feldblyum T.V."/>
            <person name="D'Ascenzo M."/>
            <person name="Deng W.-L."/>
            <person name="Ramos A.R."/>
            <person name="Alfano J.R."/>
            <person name="Cartinhour S."/>
            <person name="Chatterjee A.K."/>
            <person name="Delaney T.P."/>
            <person name="Lazarowitz S.G."/>
            <person name="Martin G.B."/>
            <person name="Schneider D.J."/>
            <person name="Tang X."/>
            <person name="Bender C.L."/>
            <person name="White O."/>
            <person name="Fraser C.M."/>
            <person name="Collmer A."/>
        </authorList>
    </citation>
    <scope>NUCLEOTIDE SEQUENCE [LARGE SCALE GENOMIC DNA]</scope>
    <source>
        <strain>ATCC BAA-871 / DC3000</strain>
    </source>
</reference>
<accession>Q87UL3</accession>
<name>LGT_PSESM</name>
<sequence length="270" mass="30143">MLPYPQIDPVAVAIGPLQIHWYGLMYLVGIGGAWLLASRRLNKFDPTWTKEKLSDLIFWLAMGVIVGGRLGYVLFYDLSAYIANPLLIFEVWKGGMAFHGGFVGVMIAAWWFGKRNGKSFFQLMDFVAPLVPIGLGAGRIGNFINAELWGKPTDVPWAMVFPPFSDPAQLARHPSQLYQFALEGVALFIILNLYARKPRPTMAVSGMFALFYGIFRFVVEFVRVPDAQLGYLAWGWVTMGQILSLPMIIAGLFLIWLAYKRDPAASKAAV</sequence>
<evidence type="ECO:0000255" key="1">
    <source>
        <dbReference type="HAMAP-Rule" id="MF_01147"/>
    </source>
</evidence>
<proteinExistence type="inferred from homology"/>